<organism>
    <name type="scientific">Shigella dysenteriae serotype 1 (strain Sd197)</name>
    <dbReference type="NCBI Taxonomy" id="300267"/>
    <lineage>
        <taxon>Bacteria</taxon>
        <taxon>Pseudomonadati</taxon>
        <taxon>Pseudomonadota</taxon>
        <taxon>Gammaproteobacteria</taxon>
        <taxon>Enterobacterales</taxon>
        <taxon>Enterobacteriaceae</taxon>
        <taxon>Shigella</taxon>
    </lineage>
</organism>
<evidence type="ECO:0000255" key="1">
    <source>
        <dbReference type="HAMAP-Rule" id="MF_00034"/>
    </source>
</evidence>
<protein>
    <recommendedName>
        <fullName evidence="1">Crossover junction endodeoxyribonuclease RuvC</fullName>
        <ecNumber evidence="1">3.1.21.10</ecNumber>
    </recommendedName>
    <alternativeName>
        <fullName evidence="1">Holliday junction nuclease RuvC</fullName>
    </alternativeName>
    <alternativeName>
        <fullName evidence="1">Holliday junction resolvase RuvC</fullName>
    </alternativeName>
</protein>
<dbReference type="EC" id="3.1.21.10" evidence="1"/>
<dbReference type="EMBL" id="CP000034">
    <property type="protein sequence ID" value="ABB61307.1"/>
    <property type="molecule type" value="Genomic_DNA"/>
</dbReference>
<dbReference type="RefSeq" id="WP_001295503.1">
    <property type="nucleotide sequence ID" value="NC_007606.1"/>
</dbReference>
<dbReference type="RefSeq" id="YP_402798.1">
    <property type="nucleotide sequence ID" value="NC_007606.1"/>
</dbReference>
<dbReference type="SMR" id="Q32H98"/>
<dbReference type="STRING" id="300267.SDY_1150"/>
<dbReference type="EnsemblBacteria" id="ABB61307">
    <property type="protein sequence ID" value="ABB61307"/>
    <property type="gene ID" value="SDY_1150"/>
</dbReference>
<dbReference type="GeneID" id="89516631"/>
<dbReference type="KEGG" id="sdy:SDY_1150"/>
<dbReference type="PATRIC" id="fig|300267.13.peg.1354"/>
<dbReference type="HOGENOM" id="CLU_091257_2_1_6"/>
<dbReference type="Proteomes" id="UP000002716">
    <property type="component" value="Chromosome"/>
</dbReference>
<dbReference type="GO" id="GO:0005737">
    <property type="term" value="C:cytoplasm"/>
    <property type="evidence" value="ECO:0007669"/>
    <property type="project" value="UniProtKB-SubCell"/>
</dbReference>
<dbReference type="GO" id="GO:0048476">
    <property type="term" value="C:Holliday junction resolvase complex"/>
    <property type="evidence" value="ECO:0007669"/>
    <property type="project" value="UniProtKB-UniRule"/>
</dbReference>
<dbReference type="GO" id="GO:0008821">
    <property type="term" value="F:crossover junction DNA endonuclease activity"/>
    <property type="evidence" value="ECO:0007669"/>
    <property type="project" value="UniProtKB-UniRule"/>
</dbReference>
<dbReference type="GO" id="GO:0003677">
    <property type="term" value="F:DNA binding"/>
    <property type="evidence" value="ECO:0007669"/>
    <property type="project" value="UniProtKB-KW"/>
</dbReference>
<dbReference type="GO" id="GO:0000287">
    <property type="term" value="F:magnesium ion binding"/>
    <property type="evidence" value="ECO:0007669"/>
    <property type="project" value="UniProtKB-UniRule"/>
</dbReference>
<dbReference type="GO" id="GO:0006310">
    <property type="term" value="P:DNA recombination"/>
    <property type="evidence" value="ECO:0007669"/>
    <property type="project" value="UniProtKB-UniRule"/>
</dbReference>
<dbReference type="GO" id="GO:0006281">
    <property type="term" value="P:DNA repair"/>
    <property type="evidence" value="ECO:0007669"/>
    <property type="project" value="UniProtKB-UniRule"/>
</dbReference>
<dbReference type="CDD" id="cd16962">
    <property type="entry name" value="RuvC"/>
    <property type="match status" value="1"/>
</dbReference>
<dbReference type="FunFam" id="3.30.420.10:FF:000002">
    <property type="entry name" value="Crossover junction endodeoxyribonuclease RuvC"/>
    <property type="match status" value="1"/>
</dbReference>
<dbReference type="Gene3D" id="3.30.420.10">
    <property type="entry name" value="Ribonuclease H-like superfamily/Ribonuclease H"/>
    <property type="match status" value="1"/>
</dbReference>
<dbReference type="HAMAP" id="MF_00034">
    <property type="entry name" value="RuvC"/>
    <property type="match status" value="1"/>
</dbReference>
<dbReference type="InterPro" id="IPR012337">
    <property type="entry name" value="RNaseH-like_sf"/>
</dbReference>
<dbReference type="InterPro" id="IPR036397">
    <property type="entry name" value="RNaseH_sf"/>
</dbReference>
<dbReference type="InterPro" id="IPR020563">
    <property type="entry name" value="X-over_junc_endoDNase_Mg_BS"/>
</dbReference>
<dbReference type="InterPro" id="IPR002176">
    <property type="entry name" value="X-over_junc_endoDNase_RuvC"/>
</dbReference>
<dbReference type="NCBIfam" id="NF000711">
    <property type="entry name" value="PRK00039.2-1"/>
    <property type="match status" value="1"/>
</dbReference>
<dbReference type="NCBIfam" id="TIGR00228">
    <property type="entry name" value="ruvC"/>
    <property type="match status" value="1"/>
</dbReference>
<dbReference type="PANTHER" id="PTHR30194">
    <property type="entry name" value="CROSSOVER JUNCTION ENDODEOXYRIBONUCLEASE RUVC"/>
    <property type="match status" value="1"/>
</dbReference>
<dbReference type="PANTHER" id="PTHR30194:SF3">
    <property type="entry name" value="CROSSOVER JUNCTION ENDODEOXYRIBONUCLEASE RUVC"/>
    <property type="match status" value="1"/>
</dbReference>
<dbReference type="Pfam" id="PF02075">
    <property type="entry name" value="RuvC"/>
    <property type="match status" value="1"/>
</dbReference>
<dbReference type="PRINTS" id="PR00696">
    <property type="entry name" value="RSOLVASERUVC"/>
</dbReference>
<dbReference type="SUPFAM" id="SSF53098">
    <property type="entry name" value="Ribonuclease H-like"/>
    <property type="match status" value="1"/>
</dbReference>
<dbReference type="PROSITE" id="PS01321">
    <property type="entry name" value="RUVC"/>
    <property type="match status" value="1"/>
</dbReference>
<accession>Q32H98</accession>
<proteinExistence type="inferred from homology"/>
<comment type="function">
    <text evidence="1">The RuvA-RuvB-RuvC complex processes Holliday junction (HJ) DNA during genetic recombination and DNA repair. Endonuclease that resolves HJ intermediates. Cleaves cruciform DNA by making single-stranded nicks across the HJ at symmetrical positions within the homologous arms, yielding a 5'-phosphate and a 3'-hydroxyl group; requires a central core of homology in the junction. The consensus cleavage sequence is 5'-(A/T)TT(C/G)-3'. Cleavage occurs on the 3'-side of the TT dinucleotide at the point of strand exchange. HJ branch migration catalyzed by RuvA-RuvB allows RuvC to scan DNA until it finds its consensus sequence, where it cleaves and resolves the cruciform DNA.</text>
</comment>
<comment type="catalytic activity">
    <reaction evidence="1">
        <text>Endonucleolytic cleavage at a junction such as a reciprocal single-stranded crossover between two homologous DNA duplexes (Holliday junction).</text>
        <dbReference type="EC" id="3.1.21.10"/>
    </reaction>
</comment>
<comment type="cofactor">
    <cofactor evidence="1">
        <name>Mg(2+)</name>
        <dbReference type="ChEBI" id="CHEBI:18420"/>
    </cofactor>
    <text evidence="1">Binds 2 Mg(2+) ion per subunit.</text>
</comment>
<comment type="subunit">
    <text evidence="1">Homodimer which binds Holliday junction (HJ) DNA. The HJ becomes 2-fold symmetrical on binding to RuvC with unstacked arms; it has a different conformation from HJ DNA in complex with RuvA. In the full resolvosome a probable DNA-RuvA(4)-RuvB(12)-RuvC(2) complex forms which resolves the HJ.</text>
</comment>
<comment type="subcellular location">
    <subcellularLocation>
        <location evidence="1">Cytoplasm</location>
    </subcellularLocation>
</comment>
<comment type="similarity">
    <text evidence="1">Belongs to the RuvC family.</text>
</comment>
<gene>
    <name evidence="1" type="primary">ruvC</name>
    <name type="ordered locus">SDY_1150</name>
</gene>
<keyword id="KW-0963">Cytoplasm</keyword>
<keyword id="KW-0227">DNA damage</keyword>
<keyword id="KW-0233">DNA recombination</keyword>
<keyword id="KW-0234">DNA repair</keyword>
<keyword id="KW-0238">DNA-binding</keyword>
<keyword id="KW-0255">Endonuclease</keyword>
<keyword id="KW-0378">Hydrolase</keyword>
<keyword id="KW-0460">Magnesium</keyword>
<keyword id="KW-0479">Metal-binding</keyword>
<keyword id="KW-0540">Nuclease</keyword>
<keyword id="KW-1185">Reference proteome</keyword>
<reference key="1">
    <citation type="journal article" date="2005" name="Nucleic Acids Res.">
        <title>Genome dynamics and diversity of Shigella species, the etiologic agents of bacillary dysentery.</title>
        <authorList>
            <person name="Yang F."/>
            <person name="Yang J."/>
            <person name="Zhang X."/>
            <person name="Chen L."/>
            <person name="Jiang Y."/>
            <person name="Yan Y."/>
            <person name="Tang X."/>
            <person name="Wang J."/>
            <person name="Xiong Z."/>
            <person name="Dong J."/>
            <person name="Xue Y."/>
            <person name="Zhu Y."/>
            <person name="Xu X."/>
            <person name="Sun L."/>
            <person name="Chen S."/>
            <person name="Nie H."/>
            <person name="Peng J."/>
            <person name="Xu J."/>
            <person name="Wang Y."/>
            <person name="Yuan Z."/>
            <person name="Wen Y."/>
            <person name="Yao Z."/>
            <person name="Shen Y."/>
            <person name="Qiang B."/>
            <person name="Hou Y."/>
            <person name="Yu J."/>
            <person name="Jin Q."/>
        </authorList>
    </citation>
    <scope>NUCLEOTIDE SEQUENCE [LARGE SCALE GENOMIC DNA]</scope>
    <source>
        <strain>Sd197</strain>
    </source>
</reference>
<feature type="chain" id="PRO_0000225177" description="Crossover junction endodeoxyribonuclease RuvC">
    <location>
        <begin position="1"/>
        <end position="173"/>
    </location>
</feature>
<feature type="active site" evidence="1">
    <location>
        <position position="8"/>
    </location>
</feature>
<feature type="active site" evidence="1">
    <location>
        <position position="67"/>
    </location>
</feature>
<feature type="active site" evidence="1">
    <location>
        <position position="139"/>
    </location>
</feature>
<feature type="binding site" evidence="1">
    <location>
        <position position="8"/>
    </location>
    <ligand>
        <name>Mg(2+)</name>
        <dbReference type="ChEBI" id="CHEBI:18420"/>
        <label>1</label>
    </ligand>
</feature>
<feature type="binding site" evidence="1">
    <location>
        <position position="67"/>
    </location>
    <ligand>
        <name>Mg(2+)</name>
        <dbReference type="ChEBI" id="CHEBI:18420"/>
        <label>2</label>
    </ligand>
</feature>
<feature type="binding site" evidence="1">
    <location>
        <position position="139"/>
    </location>
    <ligand>
        <name>Mg(2+)</name>
        <dbReference type="ChEBI" id="CHEBI:18420"/>
        <label>1</label>
    </ligand>
</feature>
<name>RUVC_SHIDS</name>
<sequence length="173" mass="18747">MAIILGIDPGSRVTGYGVIRQVGRQLSYLGSGCIRTKVDDLPSRLKLIYAGVTEIITQFQPDYFAIEQVFMAKNADSALKLGQARGVAIVAAVNQELPVFEYAARQVKQTVVGIGSAEKSQVQHMVRTLLKLPANPQADAADALAIAITHCHVSQNAMQMSESRLNLARGRLR</sequence>